<comment type="catalytic activity">
    <reaction evidence="1">
        <text>D-erythro-1-(imidazol-4-yl)glycerol 3-phosphate = 3-(imidazol-4-yl)-2-oxopropyl phosphate + H2O</text>
        <dbReference type="Rhea" id="RHEA:11040"/>
        <dbReference type="ChEBI" id="CHEBI:15377"/>
        <dbReference type="ChEBI" id="CHEBI:57766"/>
        <dbReference type="ChEBI" id="CHEBI:58278"/>
        <dbReference type="EC" id="4.2.1.19"/>
    </reaction>
</comment>
<comment type="pathway">
    <text evidence="1">Amino-acid biosynthesis; L-histidine biosynthesis; L-histidine from 5-phospho-alpha-D-ribose 1-diphosphate: step 6/9.</text>
</comment>
<comment type="subcellular location">
    <subcellularLocation>
        <location evidence="1">Cytoplasm</location>
    </subcellularLocation>
</comment>
<comment type="similarity">
    <text evidence="1">Belongs to the imidazoleglycerol-phosphate dehydratase family.</text>
</comment>
<feature type="chain" id="PRO_1000092691" description="Imidazoleglycerol-phosphate dehydratase">
    <location>
        <begin position="1"/>
        <end position="195"/>
    </location>
</feature>
<keyword id="KW-0028">Amino-acid biosynthesis</keyword>
<keyword id="KW-0963">Cytoplasm</keyword>
<keyword id="KW-0368">Histidine biosynthesis</keyword>
<keyword id="KW-0456">Lyase</keyword>
<keyword id="KW-1185">Reference proteome</keyword>
<sequence>MARSAAIERITKETQIKLSLEIDGKGEAQICTSVPFLDHMLDLFARHGLFDLKVEAHGDIDIDFHHTVEDIGIVLGTAFKEALGDKCGIRRYGNAVVPMDEVLASVATDLSGRPYLVYNVELPKVKIGDFDVELVREFFQGFVNHCGANLHLNLMYGDNVHHIVEACFKAAARALDQATQLDARIEGVMSTKGKL</sequence>
<evidence type="ECO:0000255" key="1">
    <source>
        <dbReference type="HAMAP-Rule" id="MF_00076"/>
    </source>
</evidence>
<reference key="1">
    <citation type="submission" date="2008-07" db="EMBL/GenBank/DDBJ databases">
        <title>Complete sequence of Geobacter bemidjiensis BEM.</title>
        <authorList>
            <consortium name="US DOE Joint Genome Institute"/>
            <person name="Lucas S."/>
            <person name="Copeland A."/>
            <person name="Lapidus A."/>
            <person name="Glavina del Rio T."/>
            <person name="Dalin E."/>
            <person name="Tice H."/>
            <person name="Bruce D."/>
            <person name="Goodwin L."/>
            <person name="Pitluck S."/>
            <person name="Kiss H."/>
            <person name="Brettin T."/>
            <person name="Detter J.C."/>
            <person name="Han C."/>
            <person name="Kuske C.R."/>
            <person name="Schmutz J."/>
            <person name="Larimer F."/>
            <person name="Land M."/>
            <person name="Hauser L."/>
            <person name="Kyrpides N."/>
            <person name="Lykidis A."/>
            <person name="Lovley D."/>
            <person name="Richardson P."/>
        </authorList>
    </citation>
    <scope>NUCLEOTIDE SEQUENCE [LARGE SCALE GENOMIC DNA]</scope>
    <source>
        <strain>ATCC BAA-1014 / DSM 16622 / JCM 12645 / Bem</strain>
    </source>
</reference>
<name>HIS7_CITBB</name>
<dbReference type="EC" id="4.2.1.19" evidence="1"/>
<dbReference type="EMBL" id="CP001124">
    <property type="protein sequence ID" value="ACH40695.1"/>
    <property type="molecule type" value="Genomic_DNA"/>
</dbReference>
<dbReference type="RefSeq" id="WP_012532132.1">
    <property type="nucleotide sequence ID" value="NC_011146.1"/>
</dbReference>
<dbReference type="SMR" id="B5EDR7"/>
<dbReference type="STRING" id="404380.Gbem_3703"/>
<dbReference type="KEGG" id="gbm:Gbem_3703"/>
<dbReference type="eggNOG" id="COG0131">
    <property type="taxonomic scope" value="Bacteria"/>
</dbReference>
<dbReference type="HOGENOM" id="CLU_044308_2_0_7"/>
<dbReference type="OrthoDB" id="9790411at2"/>
<dbReference type="UniPathway" id="UPA00031">
    <property type="reaction ID" value="UER00011"/>
</dbReference>
<dbReference type="Proteomes" id="UP000008825">
    <property type="component" value="Chromosome"/>
</dbReference>
<dbReference type="GO" id="GO:0005737">
    <property type="term" value="C:cytoplasm"/>
    <property type="evidence" value="ECO:0007669"/>
    <property type="project" value="UniProtKB-SubCell"/>
</dbReference>
<dbReference type="GO" id="GO:0004424">
    <property type="term" value="F:imidazoleglycerol-phosphate dehydratase activity"/>
    <property type="evidence" value="ECO:0007669"/>
    <property type="project" value="UniProtKB-UniRule"/>
</dbReference>
<dbReference type="GO" id="GO:0000105">
    <property type="term" value="P:L-histidine biosynthetic process"/>
    <property type="evidence" value="ECO:0007669"/>
    <property type="project" value="UniProtKB-UniRule"/>
</dbReference>
<dbReference type="CDD" id="cd07914">
    <property type="entry name" value="IGPD"/>
    <property type="match status" value="1"/>
</dbReference>
<dbReference type="FunFam" id="3.30.230.40:FF:000001">
    <property type="entry name" value="Imidazoleglycerol-phosphate dehydratase HisB"/>
    <property type="match status" value="1"/>
</dbReference>
<dbReference type="FunFam" id="3.30.230.40:FF:000003">
    <property type="entry name" value="Imidazoleglycerol-phosphate dehydratase HisB"/>
    <property type="match status" value="1"/>
</dbReference>
<dbReference type="Gene3D" id="3.30.230.40">
    <property type="entry name" value="Imidazole glycerol phosphate dehydratase, domain 1"/>
    <property type="match status" value="2"/>
</dbReference>
<dbReference type="HAMAP" id="MF_00076">
    <property type="entry name" value="HisB"/>
    <property type="match status" value="1"/>
</dbReference>
<dbReference type="InterPro" id="IPR038494">
    <property type="entry name" value="IGPD_sf"/>
</dbReference>
<dbReference type="InterPro" id="IPR000807">
    <property type="entry name" value="ImidazoleglycerolP_deHydtase"/>
</dbReference>
<dbReference type="InterPro" id="IPR020565">
    <property type="entry name" value="ImidazoleglycerP_deHydtase_CS"/>
</dbReference>
<dbReference type="InterPro" id="IPR020568">
    <property type="entry name" value="Ribosomal_Su5_D2-typ_SF"/>
</dbReference>
<dbReference type="NCBIfam" id="NF002111">
    <property type="entry name" value="PRK00951.2-1"/>
    <property type="match status" value="1"/>
</dbReference>
<dbReference type="NCBIfam" id="NF002114">
    <property type="entry name" value="PRK00951.2-4"/>
    <property type="match status" value="1"/>
</dbReference>
<dbReference type="NCBIfam" id="NF002115">
    <property type="entry name" value="PRK00951.2-5"/>
    <property type="match status" value="1"/>
</dbReference>
<dbReference type="PANTHER" id="PTHR23133:SF2">
    <property type="entry name" value="IMIDAZOLEGLYCEROL-PHOSPHATE DEHYDRATASE"/>
    <property type="match status" value="1"/>
</dbReference>
<dbReference type="PANTHER" id="PTHR23133">
    <property type="entry name" value="IMIDAZOLEGLYCEROL-PHOSPHATE DEHYDRATASE HIS7"/>
    <property type="match status" value="1"/>
</dbReference>
<dbReference type="Pfam" id="PF00475">
    <property type="entry name" value="IGPD"/>
    <property type="match status" value="1"/>
</dbReference>
<dbReference type="SUPFAM" id="SSF54211">
    <property type="entry name" value="Ribosomal protein S5 domain 2-like"/>
    <property type="match status" value="2"/>
</dbReference>
<dbReference type="PROSITE" id="PS00954">
    <property type="entry name" value="IGP_DEHYDRATASE_1"/>
    <property type="match status" value="1"/>
</dbReference>
<dbReference type="PROSITE" id="PS00955">
    <property type="entry name" value="IGP_DEHYDRATASE_2"/>
    <property type="match status" value="1"/>
</dbReference>
<gene>
    <name evidence="1" type="primary">hisB</name>
    <name type="ordered locus">Gbem_3703</name>
</gene>
<protein>
    <recommendedName>
        <fullName evidence="1">Imidazoleglycerol-phosphate dehydratase</fullName>
        <shortName evidence="1">IGPD</shortName>
        <ecNumber evidence="1">4.2.1.19</ecNumber>
    </recommendedName>
</protein>
<proteinExistence type="inferred from homology"/>
<organism>
    <name type="scientific">Citrifermentans bemidjiense (strain ATCC BAA-1014 / DSM 16622 / JCM 12645 / Bem)</name>
    <name type="common">Geobacter bemidjiensis</name>
    <dbReference type="NCBI Taxonomy" id="404380"/>
    <lineage>
        <taxon>Bacteria</taxon>
        <taxon>Pseudomonadati</taxon>
        <taxon>Thermodesulfobacteriota</taxon>
        <taxon>Desulfuromonadia</taxon>
        <taxon>Geobacterales</taxon>
        <taxon>Geobacteraceae</taxon>
        <taxon>Citrifermentans</taxon>
    </lineage>
</organism>
<accession>B5EDR7</accession>